<gene>
    <name evidence="1" type="primary">rplO</name>
    <name type="ordered locus">Dred_0234</name>
</gene>
<reference key="1">
    <citation type="submission" date="2007-03" db="EMBL/GenBank/DDBJ databases">
        <title>Complete sequence of Desulfotomaculum reducens MI-1.</title>
        <authorList>
            <consortium name="US DOE Joint Genome Institute"/>
            <person name="Copeland A."/>
            <person name="Lucas S."/>
            <person name="Lapidus A."/>
            <person name="Barry K."/>
            <person name="Detter J.C."/>
            <person name="Glavina del Rio T."/>
            <person name="Hammon N."/>
            <person name="Israni S."/>
            <person name="Dalin E."/>
            <person name="Tice H."/>
            <person name="Pitluck S."/>
            <person name="Sims D."/>
            <person name="Brettin T."/>
            <person name="Bruce D."/>
            <person name="Han C."/>
            <person name="Tapia R."/>
            <person name="Schmutz J."/>
            <person name="Larimer F."/>
            <person name="Land M."/>
            <person name="Hauser L."/>
            <person name="Kyrpides N."/>
            <person name="Kim E."/>
            <person name="Tebo B.M."/>
            <person name="Richardson P."/>
        </authorList>
    </citation>
    <scope>NUCLEOTIDE SEQUENCE [LARGE SCALE GENOMIC DNA]</scope>
    <source>
        <strain>ATCC BAA-1160 / DSM 100696 / MI-1</strain>
    </source>
</reference>
<sequence>MNLSELRPAPGARKKPTRKGQGIGSGLGKTAGKGHKGQNARSGGGVRPGFEGGQMPLQRRFPKRGFTNIFKKQITAINLDELNVFEAGTEVTPELLLEAGLIKKVGDGVKILGDGILEKALTVKVHAFSKSAVEKITAAGGKAEVI</sequence>
<protein>
    <recommendedName>
        <fullName evidence="1">Large ribosomal subunit protein uL15</fullName>
    </recommendedName>
    <alternativeName>
        <fullName evidence="3">50S ribosomal protein L15</fullName>
    </alternativeName>
</protein>
<dbReference type="EMBL" id="CP000612">
    <property type="protein sequence ID" value="ABO48783.1"/>
    <property type="molecule type" value="Genomic_DNA"/>
</dbReference>
<dbReference type="RefSeq" id="WP_011876623.1">
    <property type="nucleotide sequence ID" value="NC_009253.1"/>
</dbReference>
<dbReference type="SMR" id="A4J130"/>
<dbReference type="STRING" id="349161.Dred_0234"/>
<dbReference type="KEGG" id="drm:Dred_0234"/>
<dbReference type="eggNOG" id="COG0200">
    <property type="taxonomic scope" value="Bacteria"/>
</dbReference>
<dbReference type="HOGENOM" id="CLU_055188_4_2_9"/>
<dbReference type="OrthoDB" id="9810293at2"/>
<dbReference type="Proteomes" id="UP000001556">
    <property type="component" value="Chromosome"/>
</dbReference>
<dbReference type="GO" id="GO:0022625">
    <property type="term" value="C:cytosolic large ribosomal subunit"/>
    <property type="evidence" value="ECO:0007669"/>
    <property type="project" value="TreeGrafter"/>
</dbReference>
<dbReference type="GO" id="GO:0019843">
    <property type="term" value="F:rRNA binding"/>
    <property type="evidence" value="ECO:0007669"/>
    <property type="project" value="UniProtKB-UniRule"/>
</dbReference>
<dbReference type="GO" id="GO:0003735">
    <property type="term" value="F:structural constituent of ribosome"/>
    <property type="evidence" value="ECO:0007669"/>
    <property type="project" value="InterPro"/>
</dbReference>
<dbReference type="GO" id="GO:0006412">
    <property type="term" value="P:translation"/>
    <property type="evidence" value="ECO:0007669"/>
    <property type="project" value="UniProtKB-UniRule"/>
</dbReference>
<dbReference type="Gene3D" id="3.100.10.10">
    <property type="match status" value="1"/>
</dbReference>
<dbReference type="HAMAP" id="MF_01341">
    <property type="entry name" value="Ribosomal_uL15"/>
    <property type="match status" value="1"/>
</dbReference>
<dbReference type="InterPro" id="IPR030878">
    <property type="entry name" value="Ribosomal_uL15"/>
</dbReference>
<dbReference type="InterPro" id="IPR021131">
    <property type="entry name" value="Ribosomal_uL15/eL18"/>
</dbReference>
<dbReference type="InterPro" id="IPR036227">
    <property type="entry name" value="Ribosomal_uL15/eL18_sf"/>
</dbReference>
<dbReference type="InterPro" id="IPR005749">
    <property type="entry name" value="Ribosomal_uL15_bac-type"/>
</dbReference>
<dbReference type="InterPro" id="IPR001196">
    <property type="entry name" value="Ribosomal_uL15_CS"/>
</dbReference>
<dbReference type="NCBIfam" id="TIGR01071">
    <property type="entry name" value="rplO_bact"/>
    <property type="match status" value="1"/>
</dbReference>
<dbReference type="PANTHER" id="PTHR12934">
    <property type="entry name" value="50S RIBOSOMAL PROTEIN L15"/>
    <property type="match status" value="1"/>
</dbReference>
<dbReference type="PANTHER" id="PTHR12934:SF11">
    <property type="entry name" value="LARGE RIBOSOMAL SUBUNIT PROTEIN UL15M"/>
    <property type="match status" value="1"/>
</dbReference>
<dbReference type="Pfam" id="PF00828">
    <property type="entry name" value="Ribosomal_L27A"/>
    <property type="match status" value="1"/>
</dbReference>
<dbReference type="SUPFAM" id="SSF52080">
    <property type="entry name" value="Ribosomal proteins L15p and L18e"/>
    <property type="match status" value="1"/>
</dbReference>
<dbReference type="PROSITE" id="PS00475">
    <property type="entry name" value="RIBOSOMAL_L15"/>
    <property type="match status" value="1"/>
</dbReference>
<accession>A4J130</accession>
<keyword id="KW-1185">Reference proteome</keyword>
<keyword id="KW-0687">Ribonucleoprotein</keyword>
<keyword id="KW-0689">Ribosomal protein</keyword>
<keyword id="KW-0694">RNA-binding</keyword>
<keyword id="KW-0699">rRNA-binding</keyword>
<organism>
    <name type="scientific">Desulforamulus reducens (strain ATCC BAA-1160 / DSM 100696 / MI-1)</name>
    <name type="common">Desulfotomaculum reducens</name>
    <dbReference type="NCBI Taxonomy" id="349161"/>
    <lineage>
        <taxon>Bacteria</taxon>
        <taxon>Bacillati</taxon>
        <taxon>Bacillota</taxon>
        <taxon>Clostridia</taxon>
        <taxon>Eubacteriales</taxon>
        <taxon>Peptococcaceae</taxon>
        <taxon>Desulforamulus</taxon>
    </lineage>
</organism>
<feature type="chain" id="PRO_1000073313" description="Large ribosomal subunit protein uL15">
    <location>
        <begin position="1"/>
        <end position="146"/>
    </location>
</feature>
<feature type="region of interest" description="Disordered" evidence="2">
    <location>
        <begin position="1"/>
        <end position="58"/>
    </location>
</feature>
<feature type="compositionally biased region" description="Gly residues" evidence="2">
    <location>
        <begin position="21"/>
        <end position="31"/>
    </location>
</feature>
<feature type="compositionally biased region" description="Gly residues" evidence="2">
    <location>
        <begin position="42"/>
        <end position="52"/>
    </location>
</feature>
<comment type="function">
    <text evidence="1">Binds to the 23S rRNA.</text>
</comment>
<comment type="subunit">
    <text evidence="1">Part of the 50S ribosomal subunit.</text>
</comment>
<comment type="similarity">
    <text evidence="1">Belongs to the universal ribosomal protein uL15 family.</text>
</comment>
<name>RL15_DESRM</name>
<proteinExistence type="inferred from homology"/>
<evidence type="ECO:0000255" key="1">
    <source>
        <dbReference type="HAMAP-Rule" id="MF_01341"/>
    </source>
</evidence>
<evidence type="ECO:0000256" key="2">
    <source>
        <dbReference type="SAM" id="MobiDB-lite"/>
    </source>
</evidence>
<evidence type="ECO:0000305" key="3"/>